<gene>
    <name type="primary">HVA22A</name>
    <name type="ordered locus">At1g74520</name>
    <name type="ORF">F1M20.20</name>
</gene>
<keyword id="KW-0472">Membrane</keyword>
<keyword id="KW-1185">Reference proteome</keyword>
<keyword id="KW-0346">Stress response</keyword>
<keyword id="KW-0812">Transmembrane</keyword>
<keyword id="KW-1133">Transmembrane helix</keyword>
<comment type="subcellular location">
    <subcellularLocation>
        <location evidence="3">Membrane</location>
        <topology evidence="3">Multi-pass membrane protein</topology>
    </subcellularLocation>
</comment>
<comment type="tissue specificity">
    <text evidence="2">Predominantly expressed in flower buds and stem.</text>
</comment>
<comment type="induction">
    <text evidence="2">By abscisic acid (ABA), cold, drought and salt stresses.</text>
</comment>
<comment type="similarity">
    <text evidence="3">Belongs to the DP1 family.</text>
</comment>
<dbReference type="EMBL" id="AF141977">
    <property type="protein sequence ID" value="AAD31885.1"/>
    <property type="molecule type" value="Genomic_DNA"/>
</dbReference>
<dbReference type="EMBL" id="AF141659">
    <property type="protein sequence ID" value="AAD31879.1"/>
    <property type="molecule type" value="mRNA"/>
</dbReference>
<dbReference type="EMBL" id="AC011765">
    <property type="protein sequence ID" value="AAG52361.1"/>
    <property type="molecule type" value="Genomic_DNA"/>
</dbReference>
<dbReference type="EMBL" id="CP002684">
    <property type="protein sequence ID" value="AEE35603.1"/>
    <property type="molecule type" value="Genomic_DNA"/>
</dbReference>
<dbReference type="EMBL" id="CP002684">
    <property type="protein sequence ID" value="ANM60994.1"/>
    <property type="molecule type" value="Genomic_DNA"/>
</dbReference>
<dbReference type="EMBL" id="AK118825">
    <property type="protein sequence ID" value="BAC43415.1"/>
    <property type="molecule type" value="mRNA"/>
</dbReference>
<dbReference type="EMBL" id="BT005492">
    <property type="protein sequence ID" value="AAO63912.1"/>
    <property type="molecule type" value="mRNA"/>
</dbReference>
<dbReference type="PIR" id="C96774">
    <property type="entry name" value="C96774"/>
</dbReference>
<dbReference type="RefSeq" id="NP_001323240.1">
    <property type="nucleotide sequence ID" value="NM_001334652.1"/>
</dbReference>
<dbReference type="RefSeq" id="NP_177592.1">
    <property type="nucleotide sequence ID" value="NM_106112.3"/>
</dbReference>
<dbReference type="SMR" id="Q9S7V4"/>
<dbReference type="BioGRID" id="29012">
    <property type="interactions" value="1"/>
</dbReference>
<dbReference type="FunCoup" id="Q9S7V4">
    <property type="interactions" value="243"/>
</dbReference>
<dbReference type="IntAct" id="Q9S7V4">
    <property type="interactions" value="1"/>
</dbReference>
<dbReference type="STRING" id="3702.Q9S7V4"/>
<dbReference type="PaxDb" id="3702-AT1G74520.1"/>
<dbReference type="ProteomicsDB" id="247159"/>
<dbReference type="DNASU" id="843793"/>
<dbReference type="EnsemblPlants" id="AT1G74520.1">
    <property type="protein sequence ID" value="AT1G74520.1"/>
    <property type="gene ID" value="AT1G74520"/>
</dbReference>
<dbReference type="EnsemblPlants" id="AT1G74520.2">
    <property type="protein sequence ID" value="AT1G74520.2"/>
    <property type="gene ID" value="AT1G74520"/>
</dbReference>
<dbReference type="GeneID" id="843793"/>
<dbReference type="Gramene" id="AT1G74520.1">
    <property type="protein sequence ID" value="AT1G74520.1"/>
    <property type="gene ID" value="AT1G74520"/>
</dbReference>
<dbReference type="Gramene" id="AT1G74520.2">
    <property type="protein sequence ID" value="AT1G74520.2"/>
    <property type="gene ID" value="AT1G74520"/>
</dbReference>
<dbReference type="KEGG" id="ath:AT1G74520"/>
<dbReference type="Araport" id="AT1G74520"/>
<dbReference type="TAIR" id="AT1G74520">
    <property type="gene designation" value="HVA22A"/>
</dbReference>
<dbReference type="eggNOG" id="KOG1725">
    <property type="taxonomic scope" value="Eukaryota"/>
</dbReference>
<dbReference type="HOGENOM" id="CLU_098452_0_0_1"/>
<dbReference type="InParanoid" id="Q9S7V4"/>
<dbReference type="OMA" id="HEYESYE"/>
<dbReference type="OrthoDB" id="10009287at2759"/>
<dbReference type="PhylomeDB" id="Q9S7V4"/>
<dbReference type="PRO" id="PR:Q9S7V4"/>
<dbReference type="Proteomes" id="UP000006548">
    <property type="component" value="Chromosome 1"/>
</dbReference>
<dbReference type="ExpressionAtlas" id="Q9S7V4">
    <property type="expression patterns" value="baseline and differential"/>
</dbReference>
<dbReference type="GO" id="GO:0016020">
    <property type="term" value="C:membrane"/>
    <property type="evidence" value="ECO:0007669"/>
    <property type="project" value="UniProtKB-SubCell"/>
</dbReference>
<dbReference type="GO" id="GO:0042538">
    <property type="term" value="P:hyperosmotic salinity response"/>
    <property type="evidence" value="ECO:0000270"/>
    <property type="project" value="TAIR"/>
</dbReference>
<dbReference type="GO" id="GO:0009737">
    <property type="term" value="P:response to abscisic acid"/>
    <property type="evidence" value="ECO:0000270"/>
    <property type="project" value="TAIR"/>
</dbReference>
<dbReference type="GO" id="GO:0009409">
    <property type="term" value="P:response to cold"/>
    <property type="evidence" value="ECO:0000270"/>
    <property type="project" value="TAIR"/>
</dbReference>
<dbReference type="GO" id="GO:0009414">
    <property type="term" value="P:response to water deprivation"/>
    <property type="evidence" value="ECO:0000270"/>
    <property type="project" value="TAIR"/>
</dbReference>
<dbReference type="InterPro" id="IPR004345">
    <property type="entry name" value="TB2_DP1_HVA22"/>
</dbReference>
<dbReference type="PANTHER" id="PTHR12300">
    <property type="entry name" value="HVA22-LIKE PROTEINS"/>
    <property type="match status" value="1"/>
</dbReference>
<dbReference type="PANTHER" id="PTHR12300:SF161">
    <property type="entry name" value="RECEPTOR EXPRESSION-ENHANCING PROTEIN"/>
    <property type="match status" value="1"/>
</dbReference>
<dbReference type="Pfam" id="PF03134">
    <property type="entry name" value="TB2_DP1_HVA22"/>
    <property type="match status" value="1"/>
</dbReference>
<name>HA22A_ARATH</name>
<protein>
    <recommendedName>
        <fullName>HVA22-like protein a</fullName>
        <shortName>AtHVA22a</shortName>
    </recommendedName>
</protein>
<evidence type="ECO:0000255" key="1"/>
<evidence type="ECO:0000269" key="2">
    <source>
    </source>
</evidence>
<evidence type="ECO:0000305" key="3"/>
<organism>
    <name type="scientific">Arabidopsis thaliana</name>
    <name type="common">Mouse-ear cress</name>
    <dbReference type="NCBI Taxonomy" id="3702"/>
    <lineage>
        <taxon>Eukaryota</taxon>
        <taxon>Viridiplantae</taxon>
        <taxon>Streptophyta</taxon>
        <taxon>Embryophyta</taxon>
        <taxon>Tracheophyta</taxon>
        <taxon>Spermatophyta</taxon>
        <taxon>Magnoliopsida</taxon>
        <taxon>eudicotyledons</taxon>
        <taxon>Gunneridae</taxon>
        <taxon>Pentapetalae</taxon>
        <taxon>rosids</taxon>
        <taxon>malvids</taxon>
        <taxon>Brassicales</taxon>
        <taxon>Brassicaceae</taxon>
        <taxon>Camelineae</taxon>
        <taxon>Arabidopsis</taxon>
    </lineage>
</organism>
<accession>Q9S7V4</accession>
<sequence length="177" mass="20679">MGSGAGNFLKVLLRNFDVLAGPVVSLVYPLYASVQAIETQSHADDKQWLTYWVLYSLLTLIELTFAKLIEWLPIWSYMKLILTCWLVIPYFSGAAYVYEHFVRPVFVNPRSINIWYVPKKMDIFRKPDDVLTAAEKYIAENGPDAFEKILSRADKSKRYNKHEYESYETMYGEGYQY</sequence>
<reference key="1">
    <citation type="journal article" date="2002" name="Plant Mol. Biol.">
        <title>AtHVA22 gene family in Arabidopsis: phylogenetic relationship, ABA and stress regulation, and tissue-specific expression.</title>
        <authorList>
            <person name="Chen C.-N."/>
            <person name="Chu C.-C."/>
            <person name="Zentella R."/>
            <person name="Pan S.-M."/>
            <person name="Ho T.-H.D."/>
        </authorList>
    </citation>
    <scope>NUCLEOTIDE SEQUENCE [GENOMIC DNA / MRNA]</scope>
    <scope>TISSUE SPECIFICITY</scope>
    <scope>INDUCTION</scope>
    <source>
        <strain>cv. Columbia</strain>
    </source>
</reference>
<reference key="2">
    <citation type="journal article" date="2000" name="Nature">
        <title>Sequence and analysis of chromosome 1 of the plant Arabidopsis thaliana.</title>
        <authorList>
            <person name="Theologis A."/>
            <person name="Ecker J.R."/>
            <person name="Palm C.J."/>
            <person name="Federspiel N.A."/>
            <person name="Kaul S."/>
            <person name="White O."/>
            <person name="Alonso J."/>
            <person name="Altafi H."/>
            <person name="Araujo R."/>
            <person name="Bowman C.L."/>
            <person name="Brooks S.Y."/>
            <person name="Buehler E."/>
            <person name="Chan A."/>
            <person name="Chao Q."/>
            <person name="Chen H."/>
            <person name="Cheuk R.F."/>
            <person name="Chin C.W."/>
            <person name="Chung M.K."/>
            <person name="Conn L."/>
            <person name="Conway A.B."/>
            <person name="Conway A.R."/>
            <person name="Creasy T.H."/>
            <person name="Dewar K."/>
            <person name="Dunn P."/>
            <person name="Etgu P."/>
            <person name="Feldblyum T.V."/>
            <person name="Feng J.-D."/>
            <person name="Fong B."/>
            <person name="Fujii C.Y."/>
            <person name="Gill J.E."/>
            <person name="Goldsmith A.D."/>
            <person name="Haas B."/>
            <person name="Hansen N.F."/>
            <person name="Hughes B."/>
            <person name="Huizar L."/>
            <person name="Hunter J.L."/>
            <person name="Jenkins J."/>
            <person name="Johnson-Hopson C."/>
            <person name="Khan S."/>
            <person name="Khaykin E."/>
            <person name="Kim C.J."/>
            <person name="Koo H.L."/>
            <person name="Kremenetskaia I."/>
            <person name="Kurtz D.B."/>
            <person name="Kwan A."/>
            <person name="Lam B."/>
            <person name="Langin-Hooper S."/>
            <person name="Lee A."/>
            <person name="Lee J.M."/>
            <person name="Lenz C.A."/>
            <person name="Li J.H."/>
            <person name="Li Y.-P."/>
            <person name="Lin X."/>
            <person name="Liu S.X."/>
            <person name="Liu Z.A."/>
            <person name="Luros J.S."/>
            <person name="Maiti R."/>
            <person name="Marziali A."/>
            <person name="Militscher J."/>
            <person name="Miranda M."/>
            <person name="Nguyen M."/>
            <person name="Nierman W.C."/>
            <person name="Osborne B.I."/>
            <person name="Pai G."/>
            <person name="Peterson J."/>
            <person name="Pham P.K."/>
            <person name="Rizzo M."/>
            <person name="Rooney T."/>
            <person name="Rowley D."/>
            <person name="Sakano H."/>
            <person name="Salzberg S.L."/>
            <person name="Schwartz J.R."/>
            <person name="Shinn P."/>
            <person name="Southwick A.M."/>
            <person name="Sun H."/>
            <person name="Tallon L.J."/>
            <person name="Tambunga G."/>
            <person name="Toriumi M.J."/>
            <person name="Town C.D."/>
            <person name="Utterback T."/>
            <person name="Van Aken S."/>
            <person name="Vaysberg M."/>
            <person name="Vysotskaia V.S."/>
            <person name="Walker M."/>
            <person name="Wu D."/>
            <person name="Yu G."/>
            <person name="Fraser C.M."/>
            <person name="Venter J.C."/>
            <person name="Davis R.W."/>
        </authorList>
    </citation>
    <scope>NUCLEOTIDE SEQUENCE [LARGE SCALE GENOMIC DNA]</scope>
    <source>
        <strain>cv. Columbia</strain>
    </source>
</reference>
<reference key="3">
    <citation type="journal article" date="2017" name="Plant J.">
        <title>Araport11: a complete reannotation of the Arabidopsis thaliana reference genome.</title>
        <authorList>
            <person name="Cheng C.Y."/>
            <person name="Krishnakumar V."/>
            <person name="Chan A.P."/>
            <person name="Thibaud-Nissen F."/>
            <person name="Schobel S."/>
            <person name="Town C.D."/>
        </authorList>
    </citation>
    <scope>GENOME REANNOTATION</scope>
    <source>
        <strain>cv. Columbia</strain>
    </source>
</reference>
<reference key="4">
    <citation type="journal article" date="2002" name="Science">
        <title>Functional annotation of a full-length Arabidopsis cDNA collection.</title>
        <authorList>
            <person name="Seki M."/>
            <person name="Narusaka M."/>
            <person name="Kamiya A."/>
            <person name="Ishida J."/>
            <person name="Satou M."/>
            <person name="Sakurai T."/>
            <person name="Nakajima M."/>
            <person name="Enju A."/>
            <person name="Akiyama K."/>
            <person name="Oono Y."/>
            <person name="Muramatsu M."/>
            <person name="Hayashizaki Y."/>
            <person name="Kawai J."/>
            <person name="Carninci P."/>
            <person name="Itoh M."/>
            <person name="Ishii Y."/>
            <person name="Arakawa T."/>
            <person name="Shibata K."/>
            <person name="Shinagawa A."/>
            <person name="Shinozaki K."/>
        </authorList>
    </citation>
    <scope>NUCLEOTIDE SEQUENCE [LARGE SCALE MRNA]</scope>
    <source>
        <strain>cv. Columbia</strain>
    </source>
</reference>
<reference key="5">
    <citation type="journal article" date="2003" name="Science">
        <title>Empirical analysis of transcriptional activity in the Arabidopsis genome.</title>
        <authorList>
            <person name="Yamada K."/>
            <person name="Lim J."/>
            <person name="Dale J.M."/>
            <person name="Chen H."/>
            <person name="Shinn P."/>
            <person name="Palm C.J."/>
            <person name="Southwick A.M."/>
            <person name="Wu H.C."/>
            <person name="Kim C.J."/>
            <person name="Nguyen M."/>
            <person name="Pham P.K."/>
            <person name="Cheuk R.F."/>
            <person name="Karlin-Newmann G."/>
            <person name="Liu S.X."/>
            <person name="Lam B."/>
            <person name="Sakano H."/>
            <person name="Wu T."/>
            <person name="Yu G."/>
            <person name="Miranda M."/>
            <person name="Quach H.L."/>
            <person name="Tripp M."/>
            <person name="Chang C.H."/>
            <person name="Lee J.M."/>
            <person name="Toriumi M.J."/>
            <person name="Chan M.M."/>
            <person name="Tang C.C."/>
            <person name="Onodera C.S."/>
            <person name="Deng J.M."/>
            <person name="Akiyama K."/>
            <person name="Ansari Y."/>
            <person name="Arakawa T."/>
            <person name="Banh J."/>
            <person name="Banno F."/>
            <person name="Bowser L."/>
            <person name="Brooks S.Y."/>
            <person name="Carninci P."/>
            <person name="Chao Q."/>
            <person name="Choy N."/>
            <person name="Enju A."/>
            <person name="Goldsmith A.D."/>
            <person name="Gurjal M."/>
            <person name="Hansen N.F."/>
            <person name="Hayashizaki Y."/>
            <person name="Johnson-Hopson C."/>
            <person name="Hsuan V.W."/>
            <person name="Iida K."/>
            <person name="Karnes M."/>
            <person name="Khan S."/>
            <person name="Koesema E."/>
            <person name="Ishida J."/>
            <person name="Jiang P.X."/>
            <person name="Jones T."/>
            <person name="Kawai J."/>
            <person name="Kamiya A."/>
            <person name="Meyers C."/>
            <person name="Nakajima M."/>
            <person name="Narusaka M."/>
            <person name="Seki M."/>
            <person name="Sakurai T."/>
            <person name="Satou M."/>
            <person name="Tamse R."/>
            <person name="Vaysberg M."/>
            <person name="Wallender E.K."/>
            <person name="Wong C."/>
            <person name="Yamamura Y."/>
            <person name="Yuan S."/>
            <person name="Shinozaki K."/>
            <person name="Davis R.W."/>
            <person name="Theologis A."/>
            <person name="Ecker J.R."/>
        </authorList>
    </citation>
    <scope>NUCLEOTIDE SEQUENCE [LARGE SCALE MRNA]</scope>
    <source>
        <strain>cv. Columbia</strain>
    </source>
</reference>
<feature type="chain" id="PRO_0000101835" description="HVA22-like protein a">
    <location>
        <begin position="1"/>
        <end position="177"/>
    </location>
</feature>
<feature type="transmembrane region" description="Helical" evidence="1">
    <location>
        <begin position="18"/>
        <end position="38"/>
    </location>
</feature>
<feature type="transmembrane region" description="Helical" evidence="1">
    <location>
        <begin position="47"/>
        <end position="67"/>
    </location>
</feature>
<feature type="transmembrane region" description="Helical" evidence="1">
    <location>
        <begin position="68"/>
        <end position="88"/>
    </location>
</feature>
<proteinExistence type="evidence at transcript level"/>